<comment type="function">
    <text evidence="2">Component of the cytochrome c oxidase, the last enzyme in the mitochondrial electron transport chain which drives oxidative phosphorylation. The respiratory chain contains 3 multisubunit complexes succinate dehydrogenase (complex II, CII), ubiquinol-cytochrome c oxidoreductase (cytochrome b-c1 complex, complex III, CIII) and cytochrome c oxidase (complex IV, CIV), that cooperate to transfer electrons derived from NADH and succinate to molecular oxygen, creating an electrochemical gradient over the inner membrane that drives transmembrane transport and the ATP synthase. Cytochrome c oxidase is the component of the respiratory chain that catalyzes the reduction of oxygen to water. Electrons originating from reduced cytochrome c in the intermembrane space (IMS) are transferred via the dinuclear copper A center (CU(A)) of subunit 2 and heme A of subunit 1 to the active site in subunit 1, a binuclear center (BNC) formed by heme A3 and copper B (CU(B)). The BNC reduces molecular oxygen to 2 water molecules using 4 electrons from cytochrome c in the IMS and 4 protons from the mitochondrial matrix.</text>
</comment>
<comment type="catalytic activity">
    <reaction evidence="2">
        <text>4 Fe(II)-[cytochrome c] + O2 + 8 H(+)(in) = 4 Fe(III)-[cytochrome c] + 2 H2O + 4 H(+)(out)</text>
        <dbReference type="Rhea" id="RHEA:11436"/>
        <dbReference type="Rhea" id="RHEA-COMP:10350"/>
        <dbReference type="Rhea" id="RHEA-COMP:14399"/>
        <dbReference type="ChEBI" id="CHEBI:15377"/>
        <dbReference type="ChEBI" id="CHEBI:15378"/>
        <dbReference type="ChEBI" id="CHEBI:15379"/>
        <dbReference type="ChEBI" id="CHEBI:29033"/>
        <dbReference type="ChEBI" id="CHEBI:29034"/>
        <dbReference type="EC" id="7.1.1.9"/>
    </reaction>
    <physiologicalReaction direction="left-to-right" evidence="2">
        <dbReference type="Rhea" id="RHEA:11437"/>
    </physiologicalReaction>
</comment>
<comment type="cofactor">
    <cofactor evidence="3">
        <name>Cu cation</name>
        <dbReference type="ChEBI" id="CHEBI:23378"/>
    </cofactor>
    <text evidence="3">Binds a dinuclear copper A center per subunit.</text>
</comment>
<comment type="subunit">
    <text evidence="1 3">Component of the cytochrome c oxidase (complex IV, CIV), a multisubunit enzyme composed of 14 subunits. The complex is composed of a catalytic core of 3 subunits MT-CO1, MT-CO2 and MT-CO3, encoded in the mitochondrial DNA, and 11 supernumerary subunits COX4I, COX5A, COX5B, COX6A, COX6B, COX6C, COX7A, COX7B, COX7C, COX8 and NDUFA4, which are encoded in the nuclear genome. The complex exists as a monomer or a dimer and forms supercomplexes (SCs) in the inner mitochondrial membrane with NADH-ubiquinone oxidoreductase (complex I, CI) and ubiquinol-cytochrome c oxidoreductase (cytochrome b-c1 complex, complex III, CIII), resulting in different assemblies (supercomplex SCI(1)III(2)IV(1) and megacomplex MCI(2)III(2)IV(2)) (By similarity). Found in a complex with TMEM177, COA6, COX18, COX20, SCO1 and SCO2. Interacts with TMEM177 in a COX20-dependent manner. Interacts with COX20. Interacts with COX16 (By similarity).</text>
</comment>
<comment type="subcellular location">
    <subcellularLocation>
        <location evidence="3">Mitochondrion inner membrane</location>
        <topology evidence="3">Multi-pass membrane protein</topology>
    </subcellularLocation>
</comment>
<comment type="similarity">
    <text evidence="4">Belongs to the cytochrome c oxidase subunit 2 family.</text>
</comment>
<evidence type="ECO:0000250" key="1">
    <source>
        <dbReference type="UniProtKB" id="P00403"/>
    </source>
</evidence>
<evidence type="ECO:0000250" key="2">
    <source>
        <dbReference type="UniProtKB" id="P00410"/>
    </source>
</evidence>
<evidence type="ECO:0000250" key="3">
    <source>
        <dbReference type="UniProtKB" id="P68530"/>
    </source>
</evidence>
<evidence type="ECO:0000305" key="4"/>
<feature type="chain" id="PRO_0000254940" description="Cytochrome c oxidase subunit 2">
    <location>
        <begin position="1"/>
        <end position="227"/>
    </location>
</feature>
<feature type="topological domain" description="Mitochondrial intermembrane" evidence="3">
    <location>
        <begin position="1"/>
        <end position="14"/>
    </location>
</feature>
<feature type="transmembrane region" description="Helical; Name=I" evidence="3">
    <location>
        <begin position="15"/>
        <end position="45"/>
    </location>
</feature>
<feature type="topological domain" description="Mitochondrial matrix" evidence="3">
    <location>
        <begin position="46"/>
        <end position="59"/>
    </location>
</feature>
<feature type="transmembrane region" description="Helical; Name=II" evidence="3">
    <location>
        <begin position="60"/>
        <end position="87"/>
    </location>
</feature>
<feature type="topological domain" description="Mitochondrial intermembrane" evidence="3">
    <location>
        <begin position="88"/>
        <end position="227"/>
    </location>
</feature>
<feature type="binding site" evidence="3">
    <location>
        <position position="161"/>
    </location>
    <ligand>
        <name>Cu cation</name>
        <dbReference type="ChEBI" id="CHEBI:23378"/>
        <label>A1</label>
    </ligand>
</feature>
<feature type="binding site" evidence="3">
    <location>
        <position position="196"/>
    </location>
    <ligand>
        <name>Cu cation</name>
        <dbReference type="ChEBI" id="CHEBI:23378"/>
        <label>A1</label>
    </ligand>
</feature>
<feature type="binding site" evidence="3">
    <location>
        <position position="196"/>
    </location>
    <ligand>
        <name>Cu cation</name>
        <dbReference type="ChEBI" id="CHEBI:23378"/>
        <label>A2</label>
    </ligand>
</feature>
<feature type="binding site" evidence="3">
    <location>
        <position position="198"/>
    </location>
    <ligand>
        <name>Cu cation</name>
        <dbReference type="ChEBI" id="CHEBI:23378"/>
        <label>A2</label>
    </ligand>
</feature>
<feature type="binding site" evidence="3">
    <location>
        <position position="198"/>
    </location>
    <ligand>
        <name>Mg(2+)</name>
        <dbReference type="ChEBI" id="CHEBI:18420"/>
        <note>ligand shared with MT-CO1</note>
    </ligand>
</feature>
<feature type="binding site" evidence="3">
    <location>
        <position position="200"/>
    </location>
    <ligand>
        <name>Cu cation</name>
        <dbReference type="ChEBI" id="CHEBI:23378"/>
        <label>A1</label>
    </ligand>
</feature>
<feature type="binding site" evidence="3">
    <location>
        <position position="200"/>
    </location>
    <ligand>
        <name>Cu cation</name>
        <dbReference type="ChEBI" id="CHEBI:23378"/>
        <label>A2</label>
    </ligand>
</feature>
<feature type="binding site" evidence="3">
    <location>
        <position position="204"/>
    </location>
    <ligand>
        <name>Cu cation</name>
        <dbReference type="ChEBI" id="CHEBI:23378"/>
        <label>A2</label>
    </ligand>
</feature>
<feature type="binding site" evidence="3">
    <location>
        <position position="207"/>
    </location>
    <ligand>
        <name>Cu cation</name>
        <dbReference type="ChEBI" id="CHEBI:23378"/>
        <label>A1</label>
    </ligand>
</feature>
<protein>
    <recommendedName>
        <fullName>Cytochrome c oxidase subunit 2</fullName>
        <ecNumber>7.1.1.9</ecNumber>
    </recommendedName>
    <alternativeName>
        <fullName>Cytochrome c oxidase polypeptide II</fullName>
    </alternativeName>
</protein>
<geneLocation type="mitochondrion"/>
<organism>
    <name type="scientific">Sundamys muelleri</name>
    <name type="common">Mueller's giant sunda rat</name>
    <dbReference type="NCBI Taxonomy" id="83761"/>
    <lineage>
        <taxon>Eukaryota</taxon>
        <taxon>Metazoa</taxon>
        <taxon>Chordata</taxon>
        <taxon>Craniata</taxon>
        <taxon>Vertebrata</taxon>
        <taxon>Euteleostomi</taxon>
        <taxon>Mammalia</taxon>
        <taxon>Eutheria</taxon>
        <taxon>Euarchontoglires</taxon>
        <taxon>Glires</taxon>
        <taxon>Rodentia</taxon>
        <taxon>Myomorpha</taxon>
        <taxon>Muroidea</taxon>
        <taxon>Muridae</taxon>
        <taxon>Murinae</taxon>
        <taxon>Sundamys</taxon>
    </lineage>
</organism>
<keyword id="KW-0186">Copper</keyword>
<keyword id="KW-0249">Electron transport</keyword>
<keyword id="KW-0460">Magnesium</keyword>
<keyword id="KW-0472">Membrane</keyword>
<keyword id="KW-0479">Metal-binding</keyword>
<keyword id="KW-0496">Mitochondrion</keyword>
<keyword id="KW-0999">Mitochondrion inner membrane</keyword>
<keyword id="KW-0679">Respiratory chain</keyword>
<keyword id="KW-1278">Translocase</keyword>
<keyword id="KW-0812">Transmembrane</keyword>
<keyword id="KW-1133">Transmembrane helix</keyword>
<keyword id="KW-0813">Transport</keyword>
<sequence>MAYPFQLGLQDATSPIMEELTNFHDHTLMIVFLISSLVLYIISLMLTTKLTHTNTMDAQEVETIWTILPAVILILIALPSLRILYMMDEINNPALTVKTMGHQWYWSYEYTDYEDLCFDSYMIPTNDLKPGELRLLEVDNRVVLPMELPIRMLVSSEDVLHSWAVPSLGLKTDAIPGRLNQATVTSNRPGLFYGQCSEICGSNHSFMPIVLEMVPLKHFENWSASMI</sequence>
<name>COX2_SUNME</name>
<gene>
    <name type="primary">MT-CO2</name>
    <name type="synonym">COII</name>
    <name type="synonym">COX2</name>
    <name type="synonym">COXII</name>
    <name type="synonym">MTCO2</name>
</gene>
<reference key="1">
    <citation type="journal article" date="2005" name="Mol. Phylogenet. Evol.">
        <title>Multigene phylogeny of the Old World mice, Murinae, reveals distinct geographic lineages and the declining utility of mitochondrial genes compared to nuclear genes.</title>
        <authorList>
            <person name="Steppan S.J."/>
            <person name="Adkins R.M."/>
            <person name="Spinks P.Q."/>
            <person name="Hale C."/>
        </authorList>
    </citation>
    <scope>NUCLEOTIDE SEQUENCE [GENOMIC DNA]</scope>
</reference>
<proteinExistence type="inferred from homology"/>
<accession>Q38RU7</accession>
<dbReference type="EC" id="7.1.1.9"/>
<dbReference type="EMBL" id="DQ019121">
    <property type="protein sequence ID" value="ABA28453.1"/>
    <property type="molecule type" value="Genomic_DNA"/>
</dbReference>
<dbReference type="SMR" id="Q38RU7"/>
<dbReference type="GO" id="GO:0005743">
    <property type="term" value="C:mitochondrial inner membrane"/>
    <property type="evidence" value="ECO:0007669"/>
    <property type="project" value="UniProtKB-SubCell"/>
</dbReference>
<dbReference type="GO" id="GO:0045277">
    <property type="term" value="C:respiratory chain complex IV"/>
    <property type="evidence" value="ECO:0000250"/>
    <property type="project" value="UniProtKB"/>
</dbReference>
<dbReference type="GO" id="GO:0005507">
    <property type="term" value="F:copper ion binding"/>
    <property type="evidence" value="ECO:0007669"/>
    <property type="project" value="InterPro"/>
</dbReference>
<dbReference type="GO" id="GO:0004129">
    <property type="term" value="F:cytochrome-c oxidase activity"/>
    <property type="evidence" value="ECO:0007669"/>
    <property type="project" value="UniProtKB-EC"/>
</dbReference>
<dbReference type="GO" id="GO:0042773">
    <property type="term" value="P:ATP synthesis coupled electron transport"/>
    <property type="evidence" value="ECO:0007669"/>
    <property type="project" value="TreeGrafter"/>
</dbReference>
<dbReference type="CDD" id="cd13912">
    <property type="entry name" value="CcO_II_C"/>
    <property type="match status" value="1"/>
</dbReference>
<dbReference type="FunFam" id="1.10.287.90:FF:000001">
    <property type="entry name" value="Cytochrome c oxidase subunit 2"/>
    <property type="match status" value="1"/>
</dbReference>
<dbReference type="FunFam" id="2.60.40.420:FF:000001">
    <property type="entry name" value="Cytochrome c oxidase subunit 2"/>
    <property type="match status" value="1"/>
</dbReference>
<dbReference type="Gene3D" id="1.10.287.90">
    <property type="match status" value="1"/>
</dbReference>
<dbReference type="Gene3D" id="2.60.40.420">
    <property type="entry name" value="Cupredoxins - blue copper proteins"/>
    <property type="match status" value="1"/>
</dbReference>
<dbReference type="InterPro" id="IPR045187">
    <property type="entry name" value="CcO_II"/>
</dbReference>
<dbReference type="InterPro" id="IPR002429">
    <property type="entry name" value="CcO_II-like_C"/>
</dbReference>
<dbReference type="InterPro" id="IPR034210">
    <property type="entry name" value="CcO_II_C"/>
</dbReference>
<dbReference type="InterPro" id="IPR001505">
    <property type="entry name" value="Copper_CuA"/>
</dbReference>
<dbReference type="InterPro" id="IPR008972">
    <property type="entry name" value="Cupredoxin"/>
</dbReference>
<dbReference type="InterPro" id="IPR014222">
    <property type="entry name" value="Cyt_c_oxidase_su2"/>
</dbReference>
<dbReference type="InterPro" id="IPR011759">
    <property type="entry name" value="Cyt_c_oxidase_su2_TM_dom"/>
</dbReference>
<dbReference type="InterPro" id="IPR036257">
    <property type="entry name" value="Cyt_c_oxidase_su2_TM_sf"/>
</dbReference>
<dbReference type="NCBIfam" id="TIGR02866">
    <property type="entry name" value="CoxB"/>
    <property type="match status" value="1"/>
</dbReference>
<dbReference type="PANTHER" id="PTHR22888:SF9">
    <property type="entry name" value="CYTOCHROME C OXIDASE SUBUNIT 2"/>
    <property type="match status" value="1"/>
</dbReference>
<dbReference type="PANTHER" id="PTHR22888">
    <property type="entry name" value="CYTOCHROME C OXIDASE, SUBUNIT II"/>
    <property type="match status" value="1"/>
</dbReference>
<dbReference type="Pfam" id="PF00116">
    <property type="entry name" value="COX2"/>
    <property type="match status" value="1"/>
</dbReference>
<dbReference type="Pfam" id="PF02790">
    <property type="entry name" value="COX2_TM"/>
    <property type="match status" value="1"/>
</dbReference>
<dbReference type="PRINTS" id="PR01166">
    <property type="entry name" value="CYCOXIDASEII"/>
</dbReference>
<dbReference type="SUPFAM" id="SSF49503">
    <property type="entry name" value="Cupredoxins"/>
    <property type="match status" value="1"/>
</dbReference>
<dbReference type="SUPFAM" id="SSF81464">
    <property type="entry name" value="Cytochrome c oxidase subunit II-like, transmembrane region"/>
    <property type="match status" value="1"/>
</dbReference>
<dbReference type="PROSITE" id="PS00078">
    <property type="entry name" value="COX2"/>
    <property type="match status" value="1"/>
</dbReference>
<dbReference type="PROSITE" id="PS50857">
    <property type="entry name" value="COX2_CUA"/>
    <property type="match status" value="1"/>
</dbReference>
<dbReference type="PROSITE" id="PS50999">
    <property type="entry name" value="COX2_TM"/>
    <property type="match status" value="1"/>
</dbReference>